<proteinExistence type="evidence at protein level"/>
<reference key="1">
    <citation type="journal article" date="1990" name="J. Mol. Biol.">
        <title>Identification of a Caenorhabditis elegans histone H1 gene family. Characterization of a family member containing an intron and encoding a poly(A)+ mRNA.</title>
        <authorList>
            <person name="Sanicola M."/>
            <person name="Ward S."/>
            <person name="Childs G."/>
            <person name="Emmons S.W."/>
        </authorList>
    </citation>
    <scope>NUCLEOTIDE SEQUENCE [GENOMIC DNA]</scope>
</reference>
<reference key="2">
    <citation type="journal article" date="2001" name="Development">
        <title>A single histone H1 isoform (H1.1) is essential for chromatin silencing and germline development in Caenorhabditis elegans.</title>
        <authorList>
            <person name="Jedrusik M.A."/>
            <person name="Schulze E."/>
        </authorList>
    </citation>
    <scope>NUCLEOTIDE SEQUENCE [MRNA]</scope>
    <source>
        <strain>him-8</strain>
    </source>
</reference>
<reference key="3">
    <citation type="journal article" date="1998" name="Science">
        <title>Genome sequence of the nematode C. elegans: a platform for investigating biology.</title>
        <authorList>
            <consortium name="The C. elegans sequencing consortium"/>
        </authorList>
    </citation>
    <scope>NUCLEOTIDE SEQUENCE [LARGE SCALE GENOMIC DNA]</scope>
    <source>
        <strain>Bristol N2</strain>
    </source>
</reference>
<reference key="4">
    <citation type="journal article" date="1988" name="Biochem. J.">
        <title>The primary structure of the major isoform (H1.1) of histone H1 from the nematode Caenorhabditis elegans.</title>
        <authorList>
            <person name="Vanfleteren J.R."/>
            <person name="van Bun S.M."/>
            <person name="van Beeumen J.J."/>
        </authorList>
    </citation>
    <scope>PROTEIN SEQUENCE OF 2-208</scope>
    <scope>ACETYLATION AT SER-2</scope>
    <source>
        <strain>Bristol N2</strain>
    </source>
</reference>
<reference key="5">
    <citation type="journal article" date="2012" name="Mol. Cell. Biol.">
        <title>Novel roles of Caenorhabditis elegans heterochromatin protein HP1 and linker histone in the regulation of innate immune gene expression.</title>
        <authorList>
            <person name="Studencka M."/>
            <person name="Konzer A."/>
            <person name="Moneron G."/>
            <person name="Wenzel D."/>
            <person name="Opitz L."/>
            <person name="Salinas-Riester G."/>
            <person name="Bedet C."/>
            <person name="Krueger M."/>
            <person name="Hell S.W."/>
            <person name="Wisniewski J.R."/>
            <person name="Schmidt H."/>
            <person name="Palladino F."/>
            <person name="Schulze E."/>
            <person name="Jedrusik-Bode M."/>
        </authorList>
    </citation>
    <scope>FUNCTION</scope>
    <scope>SUBCELLULAR LOCATION</scope>
    <scope>METHYLATION AT LYS-14</scope>
    <scope>MUTAGENESIS OF LYS-14</scope>
</reference>
<reference key="6">
    <citation type="journal article" date="2012" name="PLoS Genet.">
        <title>Transcriptional repression of Hox genes by C. elegans HP1/HPL and H1/HIS-24.</title>
        <authorList>
            <person name="Studencka M."/>
            <person name="Wesolowski R."/>
            <person name="Opitz L."/>
            <person name="Salinas-Riester G."/>
            <person name="Wisniewski J.R."/>
            <person name="Jedrusik-Bode M."/>
        </authorList>
    </citation>
    <scope>FUNCTION</scope>
    <scope>INTERACTION WITH HPL-1 AND HISTONE H3</scope>
    <scope>METHYLATION AT LYS-14</scope>
</reference>
<reference key="7">
    <citation type="journal article" date="2019" name="PLoS Genet.">
        <title>The demethylase NMAD-1 regulates DNA replication and repair in the Caenorhabditis elegans germline.</title>
        <authorList>
            <person name="Wang S.Y."/>
            <person name="Mao H."/>
            <person name="Shibuya H."/>
            <person name="Uzawa S."/>
            <person name="O'Brown Z.K."/>
            <person name="Wesenberg S."/>
            <person name="Shin N."/>
            <person name="Saito T.T."/>
            <person name="Gao J."/>
            <person name="Meyer B.J."/>
            <person name="Colaiacovo M.P."/>
            <person name="Greer E.L."/>
        </authorList>
    </citation>
    <scope>INTERACTION WITH NMAD-1</scope>
</reference>
<dbReference type="EMBL" id="X53277">
    <property type="protein sequence ID" value="CAA37372.1"/>
    <property type="molecule type" value="Genomic_DNA"/>
</dbReference>
<dbReference type="EMBL" id="AF017810">
    <property type="protein sequence ID" value="AAB70665.1"/>
    <property type="molecule type" value="mRNA"/>
</dbReference>
<dbReference type="EMBL" id="BX284606">
    <property type="protein sequence ID" value="CAB01892.1"/>
    <property type="molecule type" value="Genomic_DNA"/>
</dbReference>
<dbReference type="PIR" id="T23778">
    <property type="entry name" value="T23778"/>
</dbReference>
<dbReference type="RefSeq" id="NP_510410.1">
    <property type="nucleotide sequence ID" value="NM_078009.7"/>
</dbReference>
<dbReference type="SMR" id="P10771"/>
<dbReference type="BioGRID" id="46444">
    <property type="interactions" value="21"/>
</dbReference>
<dbReference type="FunCoup" id="P10771">
    <property type="interactions" value="448"/>
</dbReference>
<dbReference type="IntAct" id="P10771">
    <property type="interactions" value="1"/>
</dbReference>
<dbReference type="STRING" id="6239.M163.3.1"/>
<dbReference type="iPTMnet" id="P10771"/>
<dbReference type="PaxDb" id="6239-M163.3"/>
<dbReference type="EnsemblMetazoa" id="M163.3.1">
    <property type="protein sequence ID" value="M163.3.1"/>
    <property type="gene ID" value="WBGene00001898"/>
</dbReference>
<dbReference type="GeneID" id="181545"/>
<dbReference type="KEGG" id="cel:CELE_M163.3"/>
<dbReference type="UCSC" id="M163.3">
    <property type="organism name" value="c. elegans"/>
</dbReference>
<dbReference type="AGR" id="WB:WBGene00001898"/>
<dbReference type="CTD" id="181545"/>
<dbReference type="WormBase" id="M163.3">
    <property type="protein sequence ID" value="CE12450"/>
    <property type="gene ID" value="WBGene00001898"/>
    <property type="gene designation" value="his-24"/>
</dbReference>
<dbReference type="eggNOG" id="KOG4012">
    <property type="taxonomic scope" value="Eukaryota"/>
</dbReference>
<dbReference type="HOGENOM" id="CLU_052897_1_1_1"/>
<dbReference type="InParanoid" id="P10771"/>
<dbReference type="OMA" id="PVYSAMI"/>
<dbReference type="OrthoDB" id="1110759at2759"/>
<dbReference type="PRO" id="PR:P10771"/>
<dbReference type="Proteomes" id="UP000001940">
    <property type="component" value="Chromosome X"/>
</dbReference>
<dbReference type="Bgee" id="WBGene00001898">
    <property type="expression patterns" value="Expressed in pharyngeal muscle cell (C elegans) and 4 other cell types or tissues"/>
</dbReference>
<dbReference type="GO" id="GO:0000781">
    <property type="term" value="C:chromosome, telomeric region"/>
    <property type="evidence" value="ECO:0000314"/>
    <property type="project" value="WormBase"/>
</dbReference>
<dbReference type="GO" id="GO:0005737">
    <property type="term" value="C:cytoplasm"/>
    <property type="evidence" value="ECO:0000314"/>
    <property type="project" value="WormBase"/>
</dbReference>
<dbReference type="GO" id="GO:0000786">
    <property type="term" value="C:nucleosome"/>
    <property type="evidence" value="ECO:0007669"/>
    <property type="project" value="InterPro"/>
</dbReference>
<dbReference type="GO" id="GO:0005634">
    <property type="term" value="C:nucleus"/>
    <property type="evidence" value="ECO:0000314"/>
    <property type="project" value="WormBase"/>
</dbReference>
<dbReference type="GO" id="GO:0003690">
    <property type="term" value="F:double-stranded DNA binding"/>
    <property type="evidence" value="ECO:0000318"/>
    <property type="project" value="GO_Central"/>
</dbReference>
<dbReference type="GO" id="GO:0061628">
    <property type="term" value="F:histone H3K27me3 reader activity"/>
    <property type="evidence" value="ECO:0000353"/>
    <property type="project" value="UniProtKB"/>
</dbReference>
<dbReference type="GO" id="GO:0031492">
    <property type="term" value="F:nucleosomal DNA binding"/>
    <property type="evidence" value="ECO:0000318"/>
    <property type="project" value="GO_Central"/>
</dbReference>
<dbReference type="GO" id="GO:0030527">
    <property type="term" value="F:structural constituent of chromatin"/>
    <property type="evidence" value="ECO:0007669"/>
    <property type="project" value="InterPro"/>
</dbReference>
<dbReference type="GO" id="GO:0006338">
    <property type="term" value="P:chromatin remodeling"/>
    <property type="evidence" value="ECO:0000315"/>
    <property type="project" value="UniProtKB"/>
</dbReference>
<dbReference type="GO" id="GO:0030261">
    <property type="term" value="P:chromosome condensation"/>
    <property type="evidence" value="ECO:0000318"/>
    <property type="project" value="GO_Central"/>
</dbReference>
<dbReference type="GO" id="GO:0050830">
    <property type="term" value="P:defense response to Gram-positive bacterium"/>
    <property type="evidence" value="ECO:0000315"/>
    <property type="project" value="UniProtKB"/>
</dbReference>
<dbReference type="GO" id="GO:0045910">
    <property type="term" value="P:negative regulation of DNA recombination"/>
    <property type="evidence" value="ECO:0000318"/>
    <property type="project" value="GO_Central"/>
</dbReference>
<dbReference type="GO" id="GO:0010629">
    <property type="term" value="P:negative regulation of gene expression"/>
    <property type="evidence" value="ECO:0000315"/>
    <property type="project" value="UniProtKB"/>
</dbReference>
<dbReference type="GO" id="GO:0006334">
    <property type="term" value="P:nucleosome assembly"/>
    <property type="evidence" value="ECO:0007669"/>
    <property type="project" value="InterPro"/>
</dbReference>
<dbReference type="CDD" id="cd00073">
    <property type="entry name" value="H15"/>
    <property type="match status" value="1"/>
</dbReference>
<dbReference type="FunFam" id="1.10.10.10:FF:000140">
    <property type="entry name" value="Histone H1.0"/>
    <property type="match status" value="1"/>
</dbReference>
<dbReference type="Gene3D" id="1.10.10.10">
    <property type="entry name" value="Winged helix-like DNA-binding domain superfamily/Winged helix DNA-binding domain"/>
    <property type="match status" value="1"/>
</dbReference>
<dbReference type="InterPro" id="IPR005819">
    <property type="entry name" value="H1/H5"/>
</dbReference>
<dbReference type="InterPro" id="IPR005818">
    <property type="entry name" value="Histone_H1/H5_H15"/>
</dbReference>
<dbReference type="InterPro" id="IPR036388">
    <property type="entry name" value="WH-like_DNA-bd_sf"/>
</dbReference>
<dbReference type="InterPro" id="IPR036390">
    <property type="entry name" value="WH_DNA-bd_sf"/>
</dbReference>
<dbReference type="PANTHER" id="PTHR11467:SF36">
    <property type="entry name" value="HISTONE 24-RELATED"/>
    <property type="match status" value="1"/>
</dbReference>
<dbReference type="PANTHER" id="PTHR11467">
    <property type="entry name" value="HISTONE H1"/>
    <property type="match status" value="1"/>
</dbReference>
<dbReference type="Pfam" id="PF00538">
    <property type="entry name" value="Linker_histone"/>
    <property type="match status" value="1"/>
</dbReference>
<dbReference type="PRINTS" id="PR00624">
    <property type="entry name" value="HISTONEH5"/>
</dbReference>
<dbReference type="SMART" id="SM00526">
    <property type="entry name" value="H15"/>
    <property type="match status" value="1"/>
</dbReference>
<dbReference type="SUPFAM" id="SSF46785">
    <property type="entry name" value="Winged helix' DNA-binding domain"/>
    <property type="match status" value="1"/>
</dbReference>
<dbReference type="PROSITE" id="PS51504">
    <property type="entry name" value="H15"/>
    <property type="match status" value="1"/>
</dbReference>
<feature type="initiator methionine" description="Removed" evidence="6">
    <location>
        <position position="1"/>
    </location>
</feature>
<feature type="chain" id="PRO_0000195981" description="Histone 24">
    <location>
        <begin position="2"/>
        <end position="208"/>
    </location>
</feature>
<feature type="domain" description="H15" evidence="1">
    <location>
        <begin position="37"/>
        <end position="113"/>
    </location>
</feature>
<feature type="region of interest" description="Disordered" evidence="2">
    <location>
        <begin position="101"/>
        <end position="208"/>
    </location>
</feature>
<feature type="compositionally biased region" description="Low complexity" evidence="2">
    <location>
        <begin position="114"/>
        <end position="138"/>
    </location>
</feature>
<feature type="compositionally biased region" description="Basic residues" evidence="2">
    <location>
        <begin position="144"/>
        <end position="155"/>
    </location>
</feature>
<feature type="compositionally biased region" description="Basic residues" evidence="2">
    <location>
        <begin position="162"/>
        <end position="202"/>
    </location>
</feature>
<feature type="modified residue" description="N-acetylserine" evidence="8">
    <location>
        <position position="2"/>
    </location>
</feature>
<feature type="modified residue" description="N6-methyllysine" evidence="3">
    <location>
        <position position="14"/>
    </location>
</feature>
<feature type="mutagenesis site" description="Reduced survival as a result of infection with Gram-positive bacterium B.thuringiensis." evidence="3">
    <original>K</original>
    <variation>A</variation>
    <location>
        <position position="14"/>
    </location>
</feature>
<feature type="sequence conflict" description="In Ref. 1; CAA37372 and 4; AA sequence." evidence="7" ref="1 4">
    <original>M</original>
    <variation>T</variation>
    <location>
        <position position="44"/>
    </location>
</feature>
<feature type="sequence conflict" description="In Ref. 1; CAA37372." evidence="7" ref="1">
    <original>L</original>
    <variation>H</variation>
    <location>
        <position position="84"/>
    </location>
</feature>
<feature type="sequence conflict" description="In Ref. 4; AA sequence." evidence="7" ref="4">
    <original>A</original>
    <variation>K</variation>
    <location>
        <position position="101"/>
    </location>
</feature>
<feature type="sequence conflict" description="In Ref. 1; CAA37372." evidence="7" ref="1">
    <original>A</original>
    <variation>R</variation>
    <location>
        <position position="101"/>
    </location>
</feature>
<evidence type="ECO:0000255" key="1">
    <source>
        <dbReference type="PROSITE-ProRule" id="PRU00837"/>
    </source>
</evidence>
<evidence type="ECO:0000256" key="2">
    <source>
        <dbReference type="SAM" id="MobiDB-lite"/>
    </source>
</evidence>
<evidence type="ECO:0000269" key="3">
    <source>
    </source>
</evidence>
<evidence type="ECO:0000269" key="4">
    <source>
    </source>
</evidence>
<evidence type="ECO:0000269" key="5">
    <source>
    </source>
</evidence>
<evidence type="ECO:0000269" key="6">
    <source>
    </source>
</evidence>
<evidence type="ECO:0000305" key="7"/>
<evidence type="ECO:0000305" key="8">
    <source>
    </source>
</evidence>
<evidence type="ECO:0000312" key="9">
    <source>
        <dbReference type="WormBase" id="M163.3"/>
    </source>
</evidence>
<accession>P10771</accession>
<accession>Q93901</accession>
<protein>
    <recommendedName>
        <fullName evidence="9">Histone 24</fullName>
    </recommendedName>
    <alternativeName>
        <fullName evidence="9">Histone H1.1</fullName>
    </alternativeName>
</protein>
<name>H24_CAEEL</name>
<comment type="function">
    <text evidence="3 4 8">Histones H1 are necessary for the condensation of nucleosome chains into higher-order structures (Probable) (PubMed:23028351). Probably does not act as global transcriptional repressor (PubMed:23028351). Acting in concert with chromobox protein homologs hpl-1 and hpl-2, involved in reproduction, somatic gonad development, male tail development, and vulval cell fate decisions; perhaps as a result of modulating expression of Hox genes mab-5 and egl-5 (PubMed:23028351). Plays a role in linking epigenetic regulation with the innate immune response (PubMed:22083954).</text>
</comment>
<comment type="subunit">
    <text evidence="4 5">Interacts with nmad-1 (PubMed:31283754). Interacts (when monomethylated at Lys-14) with chromobox protein homolog hpl-1; the interaction is direct (PubMed:23028351). Interacts (when monomethylated at Lys-14) with histone H3 (when trimethylated on 'Lys-27'); the interaction is direct (PubMed:23028351).</text>
</comment>
<comment type="subcellular location">
    <subcellularLocation>
        <location evidence="3">Nucleus</location>
    </subcellularLocation>
    <subcellularLocation>
        <location evidence="3 8">Chromosome</location>
    </subcellularLocation>
    <subcellularLocation>
        <location evidence="3">Cytoplasm</location>
    </subcellularLocation>
    <text evidence="3">Cytoplasmic localization is observed after infection with Gram-positive bacterium B.thuringiensis.</text>
</comment>
<comment type="PTM">
    <text evidence="4">Methylation at lysine 14 is necessary to regulate male tail development.</text>
</comment>
<comment type="similarity">
    <text evidence="1">Belongs to the histone H1/H5 family.</text>
</comment>
<organism>
    <name type="scientific">Caenorhabditis elegans</name>
    <dbReference type="NCBI Taxonomy" id="6239"/>
    <lineage>
        <taxon>Eukaryota</taxon>
        <taxon>Metazoa</taxon>
        <taxon>Ecdysozoa</taxon>
        <taxon>Nematoda</taxon>
        <taxon>Chromadorea</taxon>
        <taxon>Rhabditida</taxon>
        <taxon>Rhabditina</taxon>
        <taxon>Rhabditomorpha</taxon>
        <taxon>Rhabditoidea</taxon>
        <taxon>Rhabditidae</taxon>
        <taxon>Peloderinae</taxon>
        <taxon>Caenorhabditis</taxon>
    </lineage>
</organism>
<gene>
    <name evidence="9" type="primary">his-24</name>
    <name evidence="9" type="synonym">H1.1</name>
    <name evidence="9" type="synonym">HH1</name>
    <name evidence="9" type="ORF">M163.3</name>
</gene>
<keyword id="KW-0007">Acetylation</keyword>
<keyword id="KW-0158">Chromosome</keyword>
<keyword id="KW-0963">Cytoplasm</keyword>
<keyword id="KW-0903">Direct protein sequencing</keyword>
<keyword id="KW-0238">DNA-binding</keyword>
<keyword id="KW-0488">Methylation</keyword>
<keyword id="KW-0539">Nucleus</keyword>
<keyword id="KW-1185">Reference proteome</keyword>
<sequence length="208" mass="21367">MSDSAVVAAAVEPKVPKAKAAKAAKPTKVAKAKAPVAHPPYINMIKEAIKQLKDRKGASKQAILKFISQNYKLGDNVIQINAHLRQALKRGVTSKALVQAAGSGANGRFRVPEKAAAAKKPAAAKKPAAAKKPAAAKKATGEKKAKKPAAAKPKKAATGDKKVKKAKSPKKVAKPAAKKVAKSPAKKAAPKKIAKPAAKKAAKPAAKA</sequence>